<evidence type="ECO:0000250" key="1"/>
<evidence type="ECO:0000305" key="2"/>
<reference key="1">
    <citation type="journal article" date="1992" name="Mol. Microbiol.">
        <title>Sequence diversity within the argF, fbp and recA genes of natural isolates of Neisseria meningitidis: interspecies recombination within the argF gene.</title>
        <authorList>
            <person name="Zhou J."/>
            <person name="Spratt B.G."/>
        </authorList>
    </citation>
    <scope>NUCLEOTIDE SEQUENCE [GENOMIC DNA]</scope>
    <source>
        <strain>LNP 1646</strain>
    </source>
</reference>
<reference key="2">
    <citation type="journal article" date="1999" name="Mol. Biol. Evol.">
        <title>Networks and groups within the genus Neisseria: analysis of argF, recA, rho, and 16S rRNA sequences from human Neisseria species.</title>
        <authorList>
            <person name="Smith N.H."/>
            <person name="Holmes E.C."/>
            <person name="Donovan G.M."/>
            <person name="Carpenter G.A."/>
            <person name="Spratt B.G."/>
        </authorList>
    </citation>
    <scope>NUCLEOTIDE SEQUENCE [GENOMIC DNA] OF 16-247</scope>
    <source>
        <strain>ATCC 14685 / DSM 4630 / CIP 73.16 / NCTC 10294 / NRL 30003</strain>
        <strain>LCDC 81-176</strain>
        <strain>Vedros M601</strain>
    </source>
</reference>
<protein>
    <recommendedName>
        <fullName>Ornithine carbamoyltransferase</fullName>
        <shortName>OTCase</shortName>
        <ecNumber>2.1.3.3</ecNumber>
    </recommendedName>
</protein>
<organism>
    <name type="scientific">Neisseria cinerea</name>
    <dbReference type="NCBI Taxonomy" id="483"/>
    <lineage>
        <taxon>Bacteria</taxon>
        <taxon>Pseudomonadati</taxon>
        <taxon>Pseudomonadota</taxon>
        <taxon>Betaproteobacteria</taxon>
        <taxon>Neisseriales</taxon>
        <taxon>Neisseriaceae</taxon>
        <taxon>Neisseria</taxon>
    </lineage>
</organism>
<comment type="catalytic activity">
    <reaction>
        <text>carbamoyl phosphate + L-ornithine = L-citrulline + phosphate + H(+)</text>
        <dbReference type="Rhea" id="RHEA:19513"/>
        <dbReference type="ChEBI" id="CHEBI:15378"/>
        <dbReference type="ChEBI" id="CHEBI:43474"/>
        <dbReference type="ChEBI" id="CHEBI:46911"/>
        <dbReference type="ChEBI" id="CHEBI:57743"/>
        <dbReference type="ChEBI" id="CHEBI:58228"/>
        <dbReference type="EC" id="2.1.3.3"/>
    </reaction>
</comment>
<comment type="pathway">
    <text>Amino-acid biosynthesis; L-arginine biosynthesis; L-arginine from L-ornithine and carbamoyl phosphate: step 1/3.</text>
</comment>
<comment type="subcellular location">
    <subcellularLocation>
        <location evidence="1">Cytoplasm</location>
    </subcellularLocation>
</comment>
<comment type="similarity">
    <text evidence="2">Belongs to the aspartate/ornithine carbamoyltransferase superfamily. OTCase family.</text>
</comment>
<dbReference type="EC" id="2.1.3.3"/>
<dbReference type="EMBL" id="X64869">
    <property type="protein sequence ID" value="CAA46081.1"/>
    <property type="molecule type" value="Genomic_DNA"/>
</dbReference>
<dbReference type="EMBL" id="AJ223890">
    <property type="protein sequence ID" value="CAA11621.1"/>
    <property type="molecule type" value="Genomic_DNA"/>
</dbReference>
<dbReference type="EMBL" id="AJ223891">
    <property type="protein sequence ID" value="CAA11622.1"/>
    <property type="molecule type" value="Genomic_DNA"/>
</dbReference>
<dbReference type="EMBL" id="AJ223892">
    <property type="protein sequence ID" value="CAA11623.1"/>
    <property type="molecule type" value="Genomic_DNA"/>
</dbReference>
<dbReference type="PIR" id="S24718">
    <property type="entry name" value="S24718"/>
</dbReference>
<dbReference type="SMR" id="Q01322"/>
<dbReference type="UniPathway" id="UPA00068">
    <property type="reaction ID" value="UER00112"/>
</dbReference>
<dbReference type="GO" id="GO:0005737">
    <property type="term" value="C:cytoplasm"/>
    <property type="evidence" value="ECO:0007669"/>
    <property type="project" value="UniProtKB-SubCell"/>
</dbReference>
<dbReference type="GO" id="GO:0016597">
    <property type="term" value="F:amino acid binding"/>
    <property type="evidence" value="ECO:0007669"/>
    <property type="project" value="InterPro"/>
</dbReference>
<dbReference type="GO" id="GO:0004585">
    <property type="term" value="F:ornithine carbamoyltransferase activity"/>
    <property type="evidence" value="ECO:0007669"/>
    <property type="project" value="UniProtKB-EC"/>
</dbReference>
<dbReference type="GO" id="GO:0042450">
    <property type="term" value="P:arginine biosynthetic process via ornithine"/>
    <property type="evidence" value="ECO:0007669"/>
    <property type="project" value="TreeGrafter"/>
</dbReference>
<dbReference type="GO" id="GO:0019240">
    <property type="term" value="P:citrulline biosynthetic process"/>
    <property type="evidence" value="ECO:0007669"/>
    <property type="project" value="TreeGrafter"/>
</dbReference>
<dbReference type="GO" id="GO:0006526">
    <property type="term" value="P:L-arginine biosynthetic process"/>
    <property type="evidence" value="ECO:0007669"/>
    <property type="project" value="UniProtKB-UniPathway"/>
</dbReference>
<dbReference type="FunFam" id="3.40.50.1370:FF:000004">
    <property type="entry name" value="Ornithine carbamoyltransferase"/>
    <property type="match status" value="1"/>
</dbReference>
<dbReference type="Gene3D" id="3.40.50.1370">
    <property type="entry name" value="Aspartate/ornithine carbamoyltransferase"/>
    <property type="match status" value="2"/>
</dbReference>
<dbReference type="InterPro" id="IPR006132">
    <property type="entry name" value="Asp/Orn_carbamoyltranf_P-bd"/>
</dbReference>
<dbReference type="InterPro" id="IPR006130">
    <property type="entry name" value="Asp/Orn_carbamoylTrfase"/>
</dbReference>
<dbReference type="InterPro" id="IPR036901">
    <property type="entry name" value="Asp/Orn_carbamoylTrfase_sf"/>
</dbReference>
<dbReference type="InterPro" id="IPR006131">
    <property type="entry name" value="Asp_carbamoyltransf_Asp/Orn-bd"/>
</dbReference>
<dbReference type="InterPro" id="IPR002292">
    <property type="entry name" value="Orn/put_carbamltrans"/>
</dbReference>
<dbReference type="NCBIfam" id="TIGR00658">
    <property type="entry name" value="orni_carb_tr"/>
    <property type="match status" value="1"/>
</dbReference>
<dbReference type="PANTHER" id="PTHR45753:SF2">
    <property type="entry name" value="ORNITHINE CARBAMOYLTRANSFERASE"/>
    <property type="match status" value="1"/>
</dbReference>
<dbReference type="PANTHER" id="PTHR45753">
    <property type="entry name" value="ORNITHINE CARBAMOYLTRANSFERASE, MITOCHONDRIAL"/>
    <property type="match status" value="1"/>
</dbReference>
<dbReference type="Pfam" id="PF00185">
    <property type="entry name" value="OTCace"/>
    <property type="match status" value="1"/>
</dbReference>
<dbReference type="Pfam" id="PF02729">
    <property type="entry name" value="OTCace_N"/>
    <property type="match status" value="1"/>
</dbReference>
<dbReference type="PRINTS" id="PR00100">
    <property type="entry name" value="AOTCASE"/>
</dbReference>
<dbReference type="PRINTS" id="PR00102">
    <property type="entry name" value="OTCASE"/>
</dbReference>
<dbReference type="SUPFAM" id="SSF53671">
    <property type="entry name" value="Aspartate/ornithine carbamoyltransferase"/>
    <property type="match status" value="1"/>
</dbReference>
<proteinExistence type="inferred from homology"/>
<sequence length="262" mass="29037">KTSTRTRCAFEVAARDQGAGVTYLEPSASQIGHKESIKDTARVLGRMYDGIEYRGFAQETVEELAKYAGVPVFNGLTNEFHPTQMLADALTMREHSGKPLNQTAFAYIGDARYNMANSLLVLGAKLGMDVRIGAPKTLWPSENIVARARAVAEETGGKILLTENTKEAVKGADFIHTDVWVSMGEPKEVWQERIDLLKDYRVTPELMAVSGNSKVKFMHCLPAFHNRETKVGEWIYETFGLNGVEVTEEVFESPASIVFDQA</sequence>
<keyword id="KW-0028">Amino-acid biosynthesis</keyword>
<keyword id="KW-0055">Arginine biosynthesis</keyword>
<keyword id="KW-0963">Cytoplasm</keyword>
<keyword id="KW-0808">Transferase</keyword>
<name>OTC_NEICI</name>
<accession>Q01322</accession>
<accession>O86378</accession>
<accession>O88141</accession>
<gene>
    <name type="primary">argF</name>
</gene>
<feature type="chain" id="PRO_0000112958" description="Ornithine carbamoyltransferase">
    <location>
        <begin position="1" status="less than"/>
        <end position="262" status="greater than"/>
    </location>
</feature>
<feature type="binding site" evidence="1">
    <location>
        <begin position="3"/>
        <end position="7"/>
    </location>
    <ligand>
        <name>carbamoyl phosphate</name>
        <dbReference type="ChEBI" id="CHEBI:58228"/>
    </ligand>
</feature>
<feature type="binding site" evidence="1">
    <location>
        <position position="30"/>
    </location>
    <ligand>
        <name>carbamoyl phosphate</name>
        <dbReference type="ChEBI" id="CHEBI:58228"/>
    </ligand>
</feature>
<feature type="binding site" evidence="1">
    <location>
        <position position="54"/>
    </location>
    <ligand>
        <name>carbamoyl phosphate</name>
        <dbReference type="ChEBI" id="CHEBI:58228"/>
    </ligand>
</feature>
<feature type="binding site" evidence="1">
    <location>
        <begin position="81"/>
        <end position="84"/>
    </location>
    <ligand>
        <name>carbamoyl phosphate</name>
        <dbReference type="ChEBI" id="CHEBI:58228"/>
    </ligand>
</feature>
<feature type="binding site" evidence="1">
    <location>
        <position position="114"/>
    </location>
    <ligand>
        <name>L-ornithine</name>
        <dbReference type="ChEBI" id="CHEBI:46911"/>
    </ligand>
</feature>
<feature type="binding site" evidence="1">
    <location>
        <position position="178"/>
    </location>
    <ligand>
        <name>L-ornithine</name>
        <dbReference type="ChEBI" id="CHEBI:46911"/>
    </ligand>
</feature>
<feature type="binding site" evidence="1">
    <location>
        <begin position="182"/>
        <end position="183"/>
    </location>
    <ligand>
        <name>L-ornithine</name>
        <dbReference type="ChEBI" id="CHEBI:46911"/>
    </ligand>
</feature>
<feature type="binding site" evidence="1">
    <location>
        <begin position="219"/>
        <end position="222"/>
    </location>
    <ligand>
        <name>carbamoyl phosphate</name>
        <dbReference type="ChEBI" id="CHEBI:58228"/>
    </ligand>
</feature>
<feature type="binding site" evidence="1">
    <location>
        <position position="247"/>
    </location>
    <ligand>
        <name>carbamoyl phosphate</name>
        <dbReference type="ChEBI" id="CHEBI:58228"/>
    </ligand>
</feature>
<feature type="site" description="Important for structural integrity" evidence="1">
    <location>
        <position position="94"/>
    </location>
</feature>
<feature type="sequence variant" description="In strain: NCTC 10294.">
    <original>G</original>
    <variation>A</variation>
    <location>
        <position position="50"/>
    </location>
</feature>
<feature type="sequence variant" description="In strain: Vedros M601 and LCDC 81-176.">
    <original>AQET</original>
    <variation>GQDV</variation>
    <location>
        <begin position="57"/>
        <end position="60"/>
    </location>
</feature>
<feature type="sequence variant" description="In strain: NCTC 10294.">
    <original>A</original>
    <variation>G</variation>
    <location>
        <position position="57"/>
    </location>
</feature>
<feature type="sequence variant" description="In strain: NCTC 10294.">
    <original>T</original>
    <variation>V</variation>
    <location>
        <position position="60"/>
    </location>
</feature>
<feature type="sequence variant" description="In strain: Vedros M601, LCDC 81-176 and NCTC 10294.">
    <original>I</original>
    <variation>V</variation>
    <location>
        <position position="108"/>
    </location>
</feature>
<feature type="sequence variant" description="In strain: NCTC 10294.">
    <original>A</original>
    <variation>G</variation>
    <location>
        <position position="116"/>
    </location>
</feature>
<feature type="sequence variant" description="In strain: NCTC 10294.">
    <original>V</original>
    <variation>I</variation>
    <location>
        <position position="121"/>
    </location>
</feature>
<feature type="sequence variant" description="In strain: NCTC 10294.">
    <original>KT</original>
    <variation>QS</variation>
    <location>
        <begin position="136"/>
        <end position="137"/>
    </location>
</feature>
<feature type="sequence variant" description="In strain: NCTC 10294.">
    <original>NIVARARAVAE</original>
    <variation>GIIAAAHAAAK</variation>
    <location>
        <begin position="143"/>
        <end position="153"/>
    </location>
</feature>
<feature type="sequence variant" description="In strain: NCTC 10294.">
    <original>G</original>
    <variation>A</variation>
    <location>
        <position position="157"/>
    </location>
</feature>
<feature type="sequence variant" description="In strain: NCTC 10294.">
    <original>L</original>
    <variation>T</variation>
    <location>
        <position position="160"/>
    </location>
</feature>
<feature type="sequence variant" description="In strain: NCTC 10294.">
    <original>TK</original>
    <variation>AH</variation>
    <location>
        <begin position="165"/>
        <end position="166"/>
    </location>
</feature>
<feature type="sequence variant" description="In strain: NCTC 10294.">
    <original>GA</original>
    <variation>NV</variation>
    <location>
        <begin position="171"/>
        <end position="172"/>
    </location>
</feature>
<feature type="sequence variant" description="In strain: Vedros M601 and LCDC 81-176.">
    <original>E</original>
    <variation>D</variation>
    <location>
        <position position="205"/>
    </location>
</feature>
<feature type="sequence variant" description="In strain: Vedros M601, LCDC 81-176 and NCTC 10294.">
    <original>V</original>
    <variation>A</variation>
    <location>
        <position position="209"/>
    </location>
</feature>
<feature type="sequence variant" description="In strain: Vedros M601, LCDC 81-176 and NCTC 10294.">
    <original>SK</original>
    <variation>PQ</variation>
    <location>
        <begin position="213"/>
        <end position="214"/>
    </location>
</feature>
<feature type="non-terminal residue">
    <location>
        <position position="1"/>
    </location>
</feature>
<feature type="non-terminal residue">
    <location>
        <position position="262"/>
    </location>
</feature>